<evidence type="ECO:0000255" key="1">
    <source>
        <dbReference type="HAMAP-Rule" id="MF_00208"/>
    </source>
</evidence>
<organism>
    <name type="scientific">Mycobacterium leprae (strain TN)</name>
    <dbReference type="NCBI Taxonomy" id="272631"/>
    <lineage>
        <taxon>Bacteria</taxon>
        <taxon>Bacillati</taxon>
        <taxon>Actinomycetota</taxon>
        <taxon>Actinomycetes</taxon>
        <taxon>Mycobacteriales</taxon>
        <taxon>Mycobacteriaceae</taxon>
        <taxon>Mycobacterium</taxon>
    </lineage>
</organism>
<accession>O69557</accession>
<reference key="1">
    <citation type="journal article" date="2001" name="Nature">
        <title>Massive gene decay in the leprosy bacillus.</title>
        <authorList>
            <person name="Cole S.T."/>
            <person name="Eiglmeier K."/>
            <person name="Parkhill J."/>
            <person name="James K.D."/>
            <person name="Thomson N.R."/>
            <person name="Wheeler P.R."/>
            <person name="Honore N."/>
            <person name="Garnier T."/>
            <person name="Churcher C.M."/>
            <person name="Harris D.E."/>
            <person name="Mungall K.L."/>
            <person name="Basham D."/>
            <person name="Brown D."/>
            <person name="Chillingworth T."/>
            <person name="Connor R."/>
            <person name="Davies R.M."/>
            <person name="Devlin K."/>
            <person name="Duthoy S."/>
            <person name="Feltwell T."/>
            <person name="Fraser A."/>
            <person name="Hamlin N."/>
            <person name="Holroyd S."/>
            <person name="Hornsby T."/>
            <person name="Jagels K."/>
            <person name="Lacroix C."/>
            <person name="Maclean J."/>
            <person name="Moule S."/>
            <person name="Murphy L.D."/>
            <person name="Oliver K."/>
            <person name="Quail M.A."/>
            <person name="Rajandream M.A."/>
            <person name="Rutherford K.M."/>
            <person name="Rutter S."/>
            <person name="Seeger K."/>
            <person name="Simon S."/>
            <person name="Simmonds M."/>
            <person name="Skelton J."/>
            <person name="Squares R."/>
            <person name="Squares S."/>
            <person name="Stevens K."/>
            <person name="Taylor K."/>
            <person name="Whitehead S."/>
            <person name="Woodward J.R."/>
            <person name="Barrell B.G."/>
        </authorList>
    </citation>
    <scope>NUCLEOTIDE SEQUENCE [LARGE SCALE GENOMIC DNA]</scope>
    <source>
        <strain>TN</strain>
    </source>
</reference>
<dbReference type="EC" id="6.3.2.13" evidence="1"/>
<dbReference type="EMBL" id="AL022602">
    <property type="protein sequence ID" value="CAA18673.1"/>
    <property type="molecule type" value="Genomic_DNA"/>
</dbReference>
<dbReference type="EMBL" id="AL583920">
    <property type="protein sequence ID" value="CAC31290.1"/>
    <property type="molecule type" value="Genomic_DNA"/>
</dbReference>
<dbReference type="PIR" id="G87022">
    <property type="entry name" value="G87022"/>
</dbReference>
<dbReference type="RefSeq" id="NP_301692.1">
    <property type="nucleotide sequence ID" value="NC_002677.1"/>
</dbReference>
<dbReference type="RefSeq" id="WP_010908016.1">
    <property type="nucleotide sequence ID" value="NC_002677.1"/>
</dbReference>
<dbReference type="SMR" id="O69557"/>
<dbReference type="STRING" id="272631.gene:17574735"/>
<dbReference type="KEGG" id="mle:ML0909"/>
<dbReference type="PATRIC" id="fig|272631.5.peg.1652"/>
<dbReference type="Leproma" id="ML0909"/>
<dbReference type="eggNOG" id="COG0769">
    <property type="taxonomic scope" value="Bacteria"/>
</dbReference>
<dbReference type="HOGENOM" id="CLU_022291_4_1_11"/>
<dbReference type="OrthoDB" id="9800958at2"/>
<dbReference type="BRENDA" id="6.3.2.13">
    <property type="organism ID" value="3504"/>
</dbReference>
<dbReference type="UniPathway" id="UPA00219"/>
<dbReference type="Proteomes" id="UP000000806">
    <property type="component" value="Chromosome"/>
</dbReference>
<dbReference type="GO" id="GO:0005737">
    <property type="term" value="C:cytoplasm"/>
    <property type="evidence" value="ECO:0007669"/>
    <property type="project" value="UniProtKB-SubCell"/>
</dbReference>
<dbReference type="GO" id="GO:0005524">
    <property type="term" value="F:ATP binding"/>
    <property type="evidence" value="ECO:0007669"/>
    <property type="project" value="UniProtKB-UniRule"/>
</dbReference>
<dbReference type="GO" id="GO:0000287">
    <property type="term" value="F:magnesium ion binding"/>
    <property type="evidence" value="ECO:0007669"/>
    <property type="project" value="UniProtKB-UniRule"/>
</dbReference>
<dbReference type="GO" id="GO:0008765">
    <property type="term" value="F:UDP-N-acetylmuramoylalanyl-D-glutamate-2,6-diaminopimelate ligase activity"/>
    <property type="evidence" value="ECO:0007669"/>
    <property type="project" value="UniProtKB-UniRule"/>
</dbReference>
<dbReference type="GO" id="GO:0051301">
    <property type="term" value="P:cell division"/>
    <property type="evidence" value="ECO:0007669"/>
    <property type="project" value="UniProtKB-KW"/>
</dbReference>
<dbReference type="GO" id="GO:0071555">
    <property type="term" value="P:cell wall organization"/>
    <property type="evidence" value="ECO:0007669"/>
    <property type="project" value="UniProtKB-KW"/>
</dbReference>
<dbReference type="GO" id="GO:0009252">
    <property type="term" value="P:peptidoglycan biosynthetic process"/>
    <property type="evidence" value="ECO:0007669"/>
    <property type="project" value="UniProtKB-UniRule"/>
</dbReference>
<dbReference type="GO" id="GO:0008360">
    <property type="term" value="P:regulation of cell shape"/>
    <property type="evidence" value="ECO:0007669"/>
    <property type="project" value="UniProtKB-KW"/>
</dbReference>
<dbReference type="Gene3D" id="3.90.190.20">
    <property type="entry name" value="Mur ligase, C-terminal domain"/>
    <property type="match status" value="1"/>
</dbReference>
<dbReference type="Gene3D" id="3.40.1190.10">
    <property type="entry name" value="Mur-like, catalytic domain"/>
    <property type="match status" value="1"/>
</dbReference>
<dbReference type="Gene3D" id="3.40.1390.10">
    <property type="entry name" value="MurE/MurF, N-terminal domain"/>
    <property type="match status" value="1"/>
</dbReference>
<dbReference type="HAMAP" id="MF_00208">
    <property type="entry name" value="MurE"/>
    <property type="match status" value="1"/>
</dbReference>
<dbReference type="InterPro" id="IPR036565">
    <property type="entry name" value="Mur-like_cat_sf"/>
</dbReference>
<dbReference type="InterPro" id="IPR004101">
    <property type="entry name" value="Mur_ligase_C"/>
</dbReference>
<dbReference type="InterPro" id="IPR036615">
    <property type="entry name" value="Mur_ligase_C_dom_sf"/>
</dbReference>
<dbReference type="InterPro" id="IPR013221">
    <property type="entry name" value="Mur_ligase_cen"/>
</dbReference>
<dbReference type="InterPro" id="IPR000713">
    <property type="entry name" value="Mur_ligase_N"/>
</dbReference>
<dbReference type="InterPro" id="IPR035911">
    <property type="entry name" value="MurE/MurF_N"/>
</dbReference>
<dbReference type="InterPro" id="IPR005761">
    <property type="entry name" value="UDP-N-AcMur-Glu-dNH2Pim_ligase"/>
</dbReference>
<dbReference type="NCBIfam" id="TIGR01085">
    <property type="entry name" value="murE"/>
    <property type="match status" value="1"/>
</dbReference>
<dbReference type="NCBIfam" id="NF001124">
    <property type="entry name" value="PRK00139.1-2"/>
    <property type="match status" value="1"/>
</dbReference>
<dbReference type="NCBIfam" id="NF001126">
    <property type="entry name" value="PRK00139.1-4"/>
    <property type="match status" value="1"/>
</dbReference>
<dbReference type="PANTHER" id="PTHR23135">
    <property type="entry name" value="MUR LIGASE FAMILY MEMBER"/>
    <property type="match status" value="1"/>
</dbReference>
<dbReference type="PANTHER" id="PTHR23135:SF4">
    <property type="entry name" value="UDP-N-ACETYLMURAMOYL-L-ALANYL-D-GLUTAMATE--2,6-DIAMINOPIMELATE LIGASE MURE HOMOLOG, CHLOROPLASTIC"/>
    <property type="match status" value="1"/>
</dbReference>
<dbReference type="Pfam" id="PF01225">
    <property type="entry name" value="Mur_ligase"/>
    <property type="match status" value="1"/>
</dbReference>
<dbReference type="Pfam" id="PF02875">
    <property type="entry name" value="Mur_ligase_C"/>
    <property type="match status" value="1"/>
</dbReference>
<dbReference type="Pfam" id="PF08245">
    <property type="entry name" value="Mur_ligase_M"/>
    <property type="match status" value="1"/>
</dbReference>
<dbReference type="SUPFAM" id="SSF53623">
    <property type="entry name" value="MurD-like peptide ligases, catalytic domain"/>
    <property type="match status" value="1"/>
</dbReference>
<dbReference type="SUPFAM" id="SSF53244">
    <property type="entry name" value="MurD-like peptide ligases, peptide-binding domain"/>
    <property type="match status" value="1"/>
</dbReference>
<dbReference type="SUPFAM" id="SSF63418">
    <property type="entry name" value="MurE/MurF N-terminal domain"/>
    <property type="match status" value="1"/>
</dbReference>
<gene>
    <name evidence="1" type="primary">murE</name>
    <name type="ordered locus">ML0909</name>
    <name type="ORF">MLCB268.07c</name>
</gene>
<keyword id="KW-0067">ATP-binding</keyword>
<keyword id="KW-0131">Cell cycle</keyword>
<keyword id="KW-0132">Cell division</keyword>
<keyword id="KW-0133">Cell shape</keyword>
<keyword id="KW-0961">Cell wall biogenesis/degradation</keyword>
<keyword id="KW-0963">Cytoplasm</keyword>
<keyword id="KW-0436">Ligase</keyword>
<keyword id="KW-0460">Magnesium</keyword>
<keyword id="KW-0547">Nucleotide-binding</keyword>
<keyword id="KW-0573">Peptidoglycan synthesis</keyword>
<keyword id="KW-1185">Reference proteome</keyword>
<proteinExistence type="inferred from homology"/>
<comment type="function">
    <text evidence="1">Catalyzes the addition of meso-diaminopimelic acid to the nucleotide precursor UDP-N-acetylmuramoyl-L-alanyl-D-glutamate (UMAG) in the biosynthesis of bacterial cell-wall peptidoglycan.</text>
</comment>
<comment type="catalytic activity">
    <reaction evidence="1">
        <text>UDP-N-acetyl-alpha-D-muramoyl-L-alanyl-D-glutamate + meso-2,6-diaminopimelate + ATP = UDP-N-acetyl-alpha-D-muramoyl-L-alanyl-gamma-D-glutamyl-meso-2,6-diaminopimelate + ADP + phosphate + H(+)</text>
        <dbReference type="Rhea" id="RHEA:23676"/>
        <dbReference type="ChEBI" id="CHEBI:15378"/>
        <dbReference type="ChEBI" id="CHEBI:30616"/>
        <dbReference type="ChEBI" id="CHEBI:43474"/>
        <dbReference type="ChEBI" id="CHEBI:57791"/>
        <dbReference type="ChEBI" id="CHEBI:83900"/>
        <dbReference type="ChEBI" id="CHEBI:83905"/>
        <dbReference type="ChEBI" id="CHEBI:456216"/>
        <dbReference type="EC" id="6.3.2.13"/>
    </reaction>
</comment>
<comment type="cofactor">
    <cofactor evidence="1">
        <name>Mg(2+)</name>
        <dbReference type="ChEBI" id="CHEBI:18420"/>
    </cofactor>
</comment>
<comment type="pathway">
    <text evidence="1">Cell wall biogenesis; peptidoglycan biosynthesis.</text>
</comment>
<comment type="subcellular location">
    <subcellularLocation>
        <location evidence="1">Cytoplasm</location>
    </subcellularLocation>
</comment>
<comment type="PTM">
    <text evidence="1">Carboxylation is probably crucial for Mg(2+) binding and, consequently, for the gamma-phosphate positioning of ATP.</text>
</comment>
<comment type="similarity">
    <text evidence="1">Belongs to the MurCDEF family. MurE subfamily.</text>
</comment>
<protein>
    <recommendedName>
        <fullName evidence="1">UDP-N-acetylmuramoyl-L-alanyl-D-glutamate--2,6-diaminopimelate ligase</fullName>
        <ecNumber evidence="1">6.3.2.13</ecNumber>
    </recommendedName>
    <alternativeName>
        <fullName evidence="1">Meso-A2pm-adding enzyme</fullName>
    </alternativeName>
    <alternativeName>
        <fullName evidence="1">Meso-diaminopimelate-adding enzyme</fullName>
    </alternativeName>
    <alternativeName>
        <fullName evidence="1">UDP-MurNAc-L-Ala-D-Glu:meso-diaminopimelate ligase</fullName>
    </alternativeName>
    <alternativeName>
        <fullName evidence="1">UDP-MurNAc-tripeptide synthetase</fullName>
    </alternativeName>
    <alternativeName>
        <fullName evidence="1">UDP-N-acetylmuramyl-tripeptide synthetase</fullName>
    </alternativeName>
</protein>
<sequence>MTEVVAVPVRLRPSATAGVRLPELVAQVGAVLADGPGQAATVPDIPVTGVTLRAQEVLSGDLFAALAGASTHGARYAGVALERGAVAVLTDVAGVAELTAQASSVPILIHPEPRSVLGGLAAAAYGHPSNRMTVVGITGTSGKTTTTYMVEAGLRAGGRVVGLVGTIGIRIDGADIPSFLTTPEAPALQAMLAAMVERGVETVVMEVSSHALSLGRVEGTQFAVAGFTNLSRDHLDFHPDMEEYFEAKAVLFDPHSLLRARTVVVCIDDDAGRATAARAGDAITVSALGQPASWRATDIRSPGVGAQEFTAVDPAGVQHRVGIRLPGRYNVANCLVALAILDVVGVSPEQASLGFRDIRIPGRLERIDCGQDFLALVDYAHKPGALHSVLTALLQPDHRLAVVFGAGGERDPGKRAPMGEIAAELADLVVVTDDNPRGEDPAAIRRDILTGTVAAGGAAQVVEIGDRRAAIQYAVAWAGPDDVVLVAGKGHETGQRGAAETCPFDDRVELARALQVRDARLLPAPGRACQ</sequence>
<feature type="chain" id="PRO_0000101912" description="UDP-N-acetylmuramoyl-L-alanyl-D-glutamate--2,6-diaminopimelate ligase">
    <location>
        <begin position="1"/>
        <end position="530"/>
    </location>
</feature>
<feature type="short sequence motif" description="Meso-diaminopimelate recognition motif">
    <location>
        <begin position="434"/>
        <end position="437"/>
    </location>
</feature>
<feature type="binding site" evidence="1">
    <location>
        <position position="52"/>
    </location>
    <ligand>
        <name>UDP-N-acetyl-alpha-D-muramoyl-L-alanyl-D-glutamate</name>
        <dbReference type="ChEBI" id="CHEBI:83900"/>
    </ligand>
</feature>
<feature type="binding site" evidence="1">
    <location>
        <begin position="139"/>
        <end position="145"/>
    </location>
    <ligand>
        <name>ATP</name>
        <dbReference type="ChEBI" id="CHEBI:30616"/>
    </ligand>
</feature>
<feature type="binding site" evidence="1">
    <location>
        <begin position="181"/>
        <end position="182"/>
    </location>
    <ligand>
        <name>UDP-N-acetyl-alpha-D-muramoyl-L-alanyl-D-glutamate</name>
        <dbReference type="ChEBI" id="CHEBI:83900"/>
    </ligand>
</feature>
<feature type="binding site" evidence="1">
    <location>
        <position position="208"/>
    </location>
    <ligand>
        <name>UDP-N-acetyl-alpha-D-muramoyl-L-alanyl-D-glutamate</name>
        <dbReference type="ChEBI" id="CHEBI:83900"/>
    </ligand>
</feature>
<feature type="binding site" evidence="1">
    <location>
        <position position="216"/>
    </location>
    <ligand>
        <name>UDP-N-acetyl-alpha-D-muramoyl-L-alanyl-D-glutamate</name>
        <dbReference type="ChEBI" id="CHEBI:83900"/>
    </ligand>
</feature>
<feature type="binding site" evidence="1">
    <location>
        <position position="410"/>
    </location>
    <ligand>
        <name>meso-2,6-diaminopimelate</name>
        <dbReference type="ChEBI" id="CHEBI:57791"/>
    </ligand>
</feature>
<feature type="binding site" evidence="1">
    <location>
        <begin position="434"/>
        <end position="437"/>
    </location>
    <ligand>
        <name>meso-2,6-diaminopimelate</name>
        <dbReference type="ChEBI" id="CHEBI:57791"/>
    </ligand>
</feature>
<feature type="binding site" evidence="1">
    <location>
        <position position="488"/>
    </location>
    <ligand>
        <name>meso-2,6-diaminopimelate</name>
        <dbReference type="ChEBI" id="CHEBI:57791"/>
    </ligand>
</feature>
<feature type="binding site" evidence="1">
    <location>
        <position position="492"/>
    </location>
    <ligand>
        <name>meso-2,6-diaminopimelate</name>
        <dbReference type="ChEBI" id="CHEBI:57791"/>
    </ligand>
</feature>
<feature type="modified residue" description="N6-carboxylysine" evidence="1">
    <location>
        <position position="248"/>
    </location>
</feature>
<name>MURE_MYCLE</name>